<gene>
    <name evidence="1" type="primary">bshC</name>
    <name type="ordered locus">MW1060</name>
</gene>
<evidence type="ECO:0000255" key="1">
    <source>
        <dbReference type="HAMAP-Rule" id="MF_01867"/>
    </source>
</evidence>
<accession>Q8NX38</accession>
<feature type="chain" id="PRO_0000378260" description="Putative cysteine ligase BshC">
    <location>
        <begin position="1"/>
        <end position="537"/>
    </location>
</feature>
<feature type="coiled-coil region" evidence="1">
    <location>
        <begin position="422"/>
        <end position="450"/>
    </location>
</feature>
<name>BSHC_STAAW</name>
<sequence length="537" mass="62807">MDCKVVSLNEKDQFIPKIKSSDPVITGLFQYDAAQQTSFEKRMSKENNGREAALANVIREYMSDLKLSSEQELNIQHLANGSKVVIGGQQAGLFGGPLYTFHKIFSIITLSKELTDTHKQQVVPVFWIAGEDHDFDEVNHTFVYNENHGSLHKVKYHTMEMPETTVSRYYPDKAELKQTLKTMFIHMKETVHTQGLLEICDRIIDQYDSWTDMFKALLHETFKAYGVLFIDAQFEPLRKMEAPMFKKILKKHQLLDDAFRATQQRTQNQGLNAMIQTDTNVHLFLHDENMRQLVSYDGKHFKLNKTDKTYIKEEIINIAENQPELFSNNVVTRPLMEEWLFNTVAFVGGPSEIKYWAELKDVFELFDVEMPIVMPRLRITYLNDRIEKLLSKYNIPLEKVLVDGVEGERSKFIREQASHQFIEKVEGMIEQQRRLNKDLLDEVAGNQNNINLVNKNNEIHIQQYDYLLKRYLLNIERENDISMKQFREIQETLHPMGGLQERIWNPLQILNDFGTDVFKPSTYPPLSYTFDHIIIKP</sequence>
<dbReference type="EC" id="6.-.-.-" evidence="1"/>
<dbReference type="EMBL" id="BA000033">
    <property type="protein sequence ID" value="BAB94925.1"/>
    <property type="molecule type" value="Genomic_DNA"/>
</dbReference>
<dbReference type="RefSeq" id="WP_000340475.1">
    <property type="nucleotide sequence ID" value="NC_003923.1"/>
</dbReference>
<dbReference type="SMR" id="Q8NX38"/>
<dbReference type="KEGG" id="sam:MW1060"/>
<dbReference type="HOGENOM" id="CLU_022249_0_0_9"/>
<dbReference type="GO" id="GO:0016874">
    <property type="term" value="F:ligase activity"/>
    <property type="evidence" value="ECO:0007669"/>
    <property type="project" value="UniProtKB-UniRule"/>
</dbReference>
<dbReference type="HAMAP" id="MF_01867">
    <property type="entry name" value="BshC"/>
    <property type="match status" value="1"/>
</dbReference>
<dbReference type="InterPro" id="IPR011199">
    <property type="entry name" value="Bacillithiol_biosynth_BshC"/>
</dbReference>
<dbReference type="InterPro" id="IPR055399">
    <property type="entry name" value="CC_BshC"/>
</dbReference>
<dbReference type="InterPro" id="IPR055398">
    <property type="entry name" value="Rossmann-like_BshC"/>
</dbReference>
<dbReference type="NCBIfam" id="TIGR03998">
    <property type="entry name" value="thiol_BshC"/>
    <property type="match status" value="1"/>
</dbReference>
<dbReference type="Pfam" id="PF24850">
    <property type="entry name" value="CC_BshC"/>
    <property type="match status" value="1"/>
</dbReference>
<dbReference type="Pfam" id="PF10079">
    <property type="entry name" value="Rossmann-like_BshC"/>
    <property type="match status" value="1"/>
</dbReference>
<dbReference type="PIRSF" id="PIRSF012535">
    <property type="entry name" value="UCP012535"/>
    <property type="match status" value="1"/>
</dbReference>
<proteinExistence type="inferred from homology"/>
<organism>
    <name type="scientific">Staphylococcus aureus (strain MW2)</name>
    <dbReference type="NCBI Taxonomy" id="196620"/>
    <lineage>
        <taxon>Bacteria</taxon>
        <taxon>Bacillati</taxon>
        <taxon>Bacillota</taxon>
        <taxon>Bacilli</taxon>
        <taxon>Bacillales</taxon>
        <taxon>Staphylococcaceae</taxon>
        <taxon>Staphylococcus</taxon>
    </lineage>
</organism>
<comment type="function">
    <text evidence="1">Involved in bacillithiol (BSH) biosynthesis. May catalyze the last step of the pathway, the addition of cysteine to glucosamine malate (GlcN-Mal) to generate BSH.</text>
</comment>
<comment type="similarity">
    <text evidence="1">Belongs to the BshC family.</text>
</comment>
<protein>
    <recommendedName>
        <fullName evidence="1">Putative cysteine ligase BshC</fullName>
        <ecNumber evidence="1">6.-.-.-</ecNumber>
    </recommendedName>
</protein>
<keyword id="KW-0175">Coiled coil</keyword>
<keyword id="KW-0436">Ligase</keyword>
<reference key="1">
    <citation type="journal article" date="2002" name="Lancet">
        <title>Genome and virulence determinants of high virulence community-acquired MRSA.</title>
        <authorList>
            <person name="Baba T."/>
            <person name="Takeuchi F."/>
            <person name="Kuroda M."/>
            <person name="Yuzawa H."/>
            <person name="Aoki K."/>
            <person name="Oguchi A."/>
            <person name="Nagai Y."/>
            <person name="Iwama N."/>
            <person name="Asano K."/>
            <person name="Naimi T."/>
            <person name="Kuroda H."/>
            <person name="Cui L."/>
            <person name="Yamamoto K."/>
            <person name="Hiramatsu K."/>
        </authorList>
    </citation>
    <scope>NUCLEOTIDE SEQUENCE [LARGE SCALE GENOMIC DNA]</scope>
    <source>
        <strain>MW2</strain>
    </source>
</reference>